<comment type="subcellular location">
    <subcellularLocation>
        <location evidence="1">Mitochondrion</location>
    </subcellularLocation>
</comment>
<sequence>MFLLYSIMNTYFLFGTTDWATLNFLVSVCLDNDYLYNKNSLFFTFFIFFLAAVFKLGLPPFFFFKIEVYKGLPLFVTFFYSVFFFFNYLSGFFFLFFVFFTSFFVYFSYLLFFFVPVFVLFFFFYLTTYDNLNCFFSISSVINSTFLVYLLASSFF</sequence>
<keyword id="KW-0496">Mitochondrion</keyword>
<evidence type="ECO:0000305" key="1"/>
<name>YM04_PARTE</name>
<geneLocation type="mitochondrion"/>
<organism>
    <name type="scientific">Paramecium tetraurelia</name>
    <dbReference type="NCBI Taxonomy" id="5888"/>
    <lineage>
        <taxon>Eukaryota</taxon>
        <taxon>Sar</taxon>
        <taxon>Alveolata</taxon>
        <taxon>Ciliophora</taxon>
        <taxon>Intramacronucleata</taxon>
        <taxon>Oligohymenophorea</taxon>
        <taxon>Peniculida</taxon>
        <taxon>Parameciidae</taxon>
        <taxon>Paramecium</taxon>
    </lineage>
</organism>
<reference key="1">
    <citation type="journal article" date="1990" name="Nucleic Acids Res.">
        <title>Nucleotide sequence of the mitochondrial genome of Paramecium.</title>
        <authorList>
            <person name="Pritchard A.E."/>
            <person name="Seilhamer J.J."/>
            <person name="Mahalingam R."/>
            <person name="Sable C.L."/>
            <person name="Venuti S.E."/>
            <person name="Cummings D.J."/>
        </authorList>
    </citation>
    <scope>NUCLEOTIDE SEQUENCE [GENOMIC DNA]</scope>
    <source>
        <strain>Stock 51</strain>
    </source>
</reference>
<accession>P15605</accession>
<feature type="chain" id="PRO_0000196866" description="Uncharacterized mitochondrial protein ORF4">
    <location>
        <begin position="1"/>
        <end position="156"/>
    </location>
</feature>
<protein>
    <recommendedName>
        <fullName>Uncharacterized mitochondrial protein ORF4</fullName>
    </recommendedName>
</protein>
<dbReference type="EMBL" id="X15917">
    <property type="protein sequence ID" value="CAA34038.1"/>
    <property type="molecule type" value="Genomic_DNA"/>
</dbReference>
<dbReference type="PIR" id="S07729">
    <property type="entry name" value="S07729"/>
</dbReference>
<dbReference type="SMR" id="P15605"/>
<dbReference type="GO" id="GO:0005739">
    <property type="term" value="C:mitochondrion"/>
    <property type="evidence" value="ECO:0007669"/>
    <property type="project" value="UniProtKB-SubCell"/>
</dbReference>
<proteinExistence type="predicted"/>